<gene>
    <name type="primary">WTM1</name>
    <name type="ordered locus">YOR230W</name>
    <name type="ORF">YOR50-20</name>
</gene>
<reference key="1">
    <citation type="submission" date="1997-06" db="EMBL/GenBank/DDBJ databases">
        <authorList>
            <person name="Pemberton L.F."/>
            <person name="Blobel G."/>
        </authorList>
    </citation>
    <scope>NUCLEOTIDE SEQUENCE [GENOMIC DNA]</scope>
</reference>
<reference key="2">
    <citation type="journal article" date="1996" name="Yeast">
        <title>Sequence and analysis of a 33 kb fragment from the right arm of chromosome XV of the yeast Saccharomyces cerevisiae.</title>
        <authorList>
            <person name="Galisson F."/>
            <person name="Dujon B."/>
        </authorList>
    </citation>
    <scope>NUCLEOTIDE SEQUENCE [GENOMIC DNA]</scope>
    <source>
        <strain>ATCC 96604 / S288c / FY1679</strain>
    </source>
</reference>
<reference key="3">
    <citation type="journal article" date="1997" name="Nature">
        <title>The nucleotide sequence of Saccharomyces cerevisiae chromosome XV.</title>
        <authorList>
            <person name="Dujon B."/>
            <person name="Albermann K."/>
            <person name="Aldea M."/>
            <person name="Alexandraki D."/>
            <person name="Ansorge W."/>
            <person name="Arino J."/>
            <person name="Benes V."/>
            <person name="Bohn C."/>
            <person name="Bolotin-Fukuhara M."/>
            <person name="Bordonne R."/>
            <person name="Boyer J."/>
            <person name="Camasses A."/>
            <person name="Casamayor A."/>
            <person name="Casas C."/>
            <person name="Cheret G."/>
            <person name="Cziepluch C."/>
            <person name="Daignan-Fornier B."/>
            <person name="Dang V.-D."/>
            <person name="de Haan M."/>
            <person name="Delius H."/>
            <person name="Durand P."/>
            <person name="Fairhead C."/>
            <person name="Feldmann H."/>
            <person name="Gaillon L."/>
            <person name="Galisson F."/>
            <person name="Gamo F.-J."/>
            <person name="Gancedo C."/>
            <person name="Goffeau A."/>
            <person name="Goulding S.E."/>
            <person name="Grivell L.A."/>
            <person name="Habbig B."/>
            <person name="Hand N.J."/>
            <person name="Hani J."/>
            <person name="Hattenhorst U."/>
            <person name="Hebling U."/>
            <person name="Hernando Y."/>
            <person name="Herrero E."/>
            <person name="Heumann K."/>
            <person name="Hiesel R."/>
            <person name="Hilger F."/>
            <person name="Hofmann B."/>
            <person name="Hollenberg C.P."/>
            <person name="Hughes B."/>
            <person name="Jauniaux J.-C."/>
            <person name="Kalogeropoulos A."/>
            <person name="Katsoulou C."/>
            <person name="Kordes E."/>
            <person name="Lafuente M.J."/>
            <person name="Landt O."/>
            <person name="Louis E.J."/>
            <person name="Maarse A.C."/>
            <person name="Madania A."/>
            <person name="Mannhaupt G."/>
            <person name="Marck C."/>
            <person name="Martin R.P."/>
            <person name="Mewes H.-W."/>
            <person name="Michaux G."/>
            <person name="Paces V."/>
            <person name="Parle-McDermott A.G."/>
            <person name="Pearson B.M."/>
            <person name="Perrin A."/>
            <person name="Pettersson B."/>
            <person name="Poch O."/>
            <person name="Pohl T.M."/>
            <person name="Poirey R."/>
            <person name="Portetelle D."/>
            <person name="Pujol A."/>
            <person name="Purnelle B."/>
            <person name="Ramezani Rad M."/>
            <person name="Rechmann S."/>
            <person name="Schwager C."/>
            <person name="Schweizer M."/>
            <person name="Sor F."/>
            <person name="Sterky F."/>
            <person name="Tarassov I.A."/>
            <person name="Teodoru C."/>
            <person name="Tettelin H."/>
            <person name="Thierry A."/>
            <person name="Tobiasch E."/>
            <person name="Tzermia M."/>
            <person name="Uhlen M."/>
            <person name="Unseld M."/>
            <person name="Valens M."/>
            <person name="Vandenbol M."/>
            <person name="Vetter I."/>
            <person name="Vlcek C."/>
            <person name="Voet M."/>
            <person name="Volckaert G."/>
            <person name="Voss H."/>
            <person name="Wambutt R."/>
            <person name="Wedler H."/>
            <person name="Wiemann S."/>
            <person name="Winsor B."/>
            <person name="Wolfe K.H."/>
            <person name="Zollner A."/>
            <person name="Zumstein E."/>
            <person name="Kleine K."/>
        </authorList>
    </citation>
    <scope>NUCLEOTIDE SEQUENCE [LARGE SCALE GENOMIC DNA]</scope>
    <source>
        <strain>ATCC 204508 / S288c</strain>
    </source>
</reference>
<reference key="4">
    <citation type="journal article" date="2014" name="G3 (Bethesda)">
        <title>The reference genome sequence of Saccharomyces cerevisiae: Then and now.</title>
        <authorList>
            <person name="Engel S.R."/>
            <person name="Dietrich F.S."/>
            <person name="Fisk D.G."/>
            <person name="Binkley G."/>
            <person name="Balakrishnan R."/>
            <person name="Costanzo M.C."/>
            <person name="Dwight S.S."/>
            <person name="Hitz B.C."/>
            <person name="Karra K."/>
            <person name="Nash R.S."/>
            <person name="Weng S."/>
            <person name="Wong E.D."/>
            <person name="Lloyd P."/>
            <person name="Skrzypek M.S."/>
            <person name="Miyasato S.R."/>
            <person name="Simison M."/>
            <person name="Cherry J.M."/>
        </authorList>
    </citation>
    <scope>GENOME REANNOTATION</scope>
    <source>
        <strain>ATCC 204508 / S288c</strain>
    </source>
</reference>
<reference key="5">
    <citation type="journal article" date="2007" name="Genome Res.">
        <title>Approaching a complete repository of sequence-verified protein-encoding clones for Saccharomyces cerevisiae.</title>
        <authorList>
            <person name="Hu Y."/>
            <person name="Rolfs A."/>
            <person name="Bhullar B."/>
            <person name="Murthy T.V.S."/>
            <person name="Zhu C."/>
            <person name="Berger M.F."/>
            <person name="Camargo A.A."/>
            <person name="Kelley F."/>
            <person name="McCarron S."/>
            <person name="Jepson D."/>
            <person name="Richardson A."/>
            <person name="Raphael J."/>
            <person name="Moreira D."/>
            <person name="Taycher E."/>
            <person name="Zuo D."/>
            <person name="Mohr S."/>
            <person name="Kane M.F."/>
            <person name="Williamson J."/>
            <person name="Simpson A.J.G."/>
            <person name="Bulyk M.L."/>
            <person name="Harlow E."/>
            <person name="Marsischky G."/>
            <person name="Kolodner R.D."/>
            <person name="LaBaer J."/>
        </authorList>
    </citation>
    <scope>NUCLEOTIDE SEQUENCE [GENOMIC DNA]</scope>
    <source>
        <strain>ATCC 204508 / S288c</strain>
    </source>
</reference>
<reference key="6">
    <citation type="journal article" date="2003" name="Nature">
        <title>Global analysis of protein expression in yeast.</title>
        <authorList>
            <person name="Ghaemmaghami S."/>
            <person name="Huh W.-K."/>
            <person name="Bower K."/>
            <person name="Howson R.W."/>
            <person name="Belle A."/>
            <person name="Dephoure N."/>
            <person name="O'Shea E.K."/>
            <person name="Weissman J.S."/>
        </authorList>
    </citation>
    <scope>LEVEL OF PROTEIN EXPRESSION [LARGE SCALE ANALYSIS]</scope>
</reference>
<reference key="7">
    <citation type="journal article" date="2006" name="Proc. Natl. Acad. Sci. U.S.A.">
        <title>Nuclear localization of the Saccharomyces cerevisiae ribonucleotide reductase small subunit requires a karyopherin and a WD40 repeat protein.</title>
        <authorList>
            <person name="Zhang Z."/>
            <person name="An X."/>
            <person name="Yang K."/>
            <person name="Perlstein D.L."/>
            <person name="Hicks L."/>
            <person name="Kelleher N."/>
            <person name="Stubbe J."/>
            <person name="Huang M."/>
        </authorList>
    </citation>
    <scope>FUNCTION</scope>
    <scope>SUBCELLULAR LOCATION</scope>
    <scope>INTERACTION WITH KAP122</scope>
</reference>
<reference key="8">
    <citation type="journal article" date="2007" name="J. Proteome Res.">
        <title>Large-scale phosphorylation analysis of alpha-factor-arrested Saccharomyces cerevisiae.</title>
        <authorList>
            <person name="Li X."/>
            <person name="Gerber S.A."/>
            <person name="Rudner A.D."/>
            <person name="Beausoleil S.A."/>
            <person name="Haas W."/>
            <person name="Villen J."/>
            <person name="Elias J.E."/>
            <person name="Gygi S.P."/>
        </authorList>
    </citation>
    <scope>IDENTIFICATION BY MASS SPECTROMETRY [LARGE SCALE ANALYSIS]</scope>
    <source>
        <strain>ADR376</strain>
    </source>
</reference>
<reference key="9">
    <citation type="journal article" date="2008" name="Mol. Cell. Proteomics">
        <title>A multidimensional chromatography technology for in-depth phosphoproteome analysis.</title>
        <authorList>
            <person name="Albuquerque C.P."/>
            <person name="Smolka M.B."/>
            <person name="Payne S.H."/>
            <person name="Bafna V."/>
            <person name="Eng J."/>
            <person name="Zhou H."/>
        </authorList>
    </citation>
    <scope>PHOSPHORYLATION [LARGE SCALE ANALYSIS] AT THR-187; SER-200 AND THR-370</scope>
    <scope>IDENTIFICATION BY MASS SPECTROMETRY [LARGE SCALE ANALYSIS]</scope>
</reference>
<reference key="10">
    <citation type="journal article" date="2009" name="Science">
        <title>Global analysis of Cdk1 substrate phosphorylation sites provides insights into evolution.</title>
        <authorList>
            <person name="Holt L.J."/>
            <person name="Tuch B.B."/>
            <person name="Villen J."/>
            <person name="Johnson A.D."/>
            <person name="Gygi S.P."/>
            <person name="Morgan D.O."/>
        </authorList>
    </citation>
    <scope>PHOSPHORYLATION [LARGE SCALE ANALYSIS] AT THR-406</scope>
    <scope>IDENTIFICATION BY MASS SPECTROMETRY [LARGE SCALE ANALYSIS]</scope>
</reference>
<protein>
    <recommendedName>
        <fullName>Transcriptional modulator WTM1</fullName>
    </recommendedName>
</protein>
<name>WTM1_YEAST</name>
<proteinExistence type="evidence at protein level"/>
<organism>
    <name type="scientific">Saccharomyces cerevisiae (strain ATCC 204508 / S288c)</name>
    <name type="common">Baker's yeast</name>
    <dbReference type="NCBI Taxonomy" id="559292"/>
    <lineage>
        <taxon>Eukaryota</taxon>
        <taxon>Fungi</taxon>
        <taxon>Dikarya</taxon>
        <taxon>Ascomycota</taxon>
        <taxon>Saccharomycotina</taxon>
        <taxon>Saccharomycetes</taxon>
        <taxon>Saccharomycetales</taxon>
        <taxon>Saccharomycetaceae</taxon>
        <taxon>Saccharomyces</taxon>
    </lineage>
</organism>
<dbReference type="EMBL" id="AF001451">
    <property type="protein sequence ID" value="AAB66316.1"/>
    <property type="molecule type" value="Genomic_DNA"/>
</dbReference>
<dbReference type="EMBL" id="X92441">
    <property type="protein sequence ID" value="CAA63193.1"/>
    <property type="molecule type" value="Genomic_DNA"/>
</dbReference>
<dbReference type="EMBL" id="Z75138">
    <property type="protein sequence ID" value="CAA99450.1"/>
    <property type="molecule type" value="Genomic_DNA"/>
</dbReference>
<dbReference type="EMBL" id="AY693156">
    <property type="protein sequence ID" value="AAT93175.1"/>
    <property type="molecule type" value="Genomic_DNA"/>
</dbReference>
<dbReference type="EMBL" id="BK006948">
    <property type="protein sequence ID" value="DAA11000.1"/>
    <property type="molecule type" value="Genomic_DNA"/>
</dbReference>
<dbReference type="PIR" id="S60957">
    <property type="entry name" value="S60957"/>
</dbReference>
<dbReference type="RefSeq" id="NP_014873.3">
    <property type="nucleotide sequence ID" value="NM_001183649.3"/>
</dbReference>
<dbReference type="SMR" id="Q12363"/>
<dbReference type="BioGRID" id="34623">
    <property type="interactions" value="110"/>
</dbReference>
<dbReference type="DIP" id="DIP-4558N"/>
<dbReference type="FunCoup" id="Q12363">
    <property type="interactions" value="408"/>
</dbReference>
<dbReference type="IntAct" id="Q12363">
    <property type="interactions" value="31"/>
</dbReference>
<dbReference type="MINT" id="Q12363"/>
<dbReference type="STRING" id="4932.YOR230W"/>
<dbReference type="iPTMnet" id="Q12363"/>
<dbReference type="PaxDb" id="4932-YOR230W"/>
<dbReference type="PeptideAtlas" id="Q12363"/>
<dbReference type="PRIDE" id="Q12363"/>
<dbReference type="TopDownProteomics" id="Q12363"/>
<dbReference type="EnsemblFungi" id="YOR230W_mRNA">
    <property type="protein sequence ID" value="YOR230W"/>
    <property type="gene ID" value="YOR230W"/>
</dbReference>
<dbReference type="GeneID" id="854405"/>
<dbReference type="KEGG" id="sce:YOR230W"/>
<dbReference type="AGR" id="SGD:S000005756"/>
<dbReference type="SGD" id="S000005756">
    <property type="gene designation" value="WTM1"/>
</dbReference>
<dbReference type="VEuPathDB" id="FungiDB:YOR230W"/>
<dbReference type="eggNOG" id="ENOG502QSEV">
    <property type="taxonomic scope" value="Eukaryota"/>
</dbReference>
<dbReference type="GeneTree" id="ENSGT00940000176348"/>
<dbReference type="HOGENOM" id="CLU_036523_0_0_1"/>
<dbReference type="InParanoid" id="Q12363"/>
<dbReference type="OMA" id="ANFYHSG"/>
<dbReference type="OrthoDB" id="427795at2759"/>
<dbReference type="BioCyc" id="YEAST:G3O-33728-MONOMER"/>
<dbReference type="Reactome" id="R-SCE-3214815">
    <property type="pathway name" value="HDACs deacetylate histones"/>
</dbReference>
<dbReference type="BioGRID-ORCS" id="854405">
    <property type="hits" value="0 hits in 10 CRISPR screens"/>
</dbReference>
<dbReference type="PRO" id="PR:Q12363"/>
<dbReference type="Proteomes" id="UP000002311">
    <property type="component" value="Chromosome XV"/>
</dbReference>
<dbReference type="RNAct" id="Q12363">
    <property type="molecule type" value="protein"/>
</dbReference>
<dbReference type="GO" id="GO:0005737">
    <property type="term" value="C:cytoplasm"/>
    <property type="evidence" value="ECO:0000318"/>
    <property type="project" value="GO_Central"/>
</dbReference>
<dbReference type="GO" id="GO:0005634">
    <property type="term" value="C:nucleus"/>
    <property type="evidence" value="ECO:0000314"/>
    <property type="project" value="SGD"/>
</dbReference>
<dbReference type="GO" id="GO:0033698">
    <property type="term" value="C:Rpd3L complex"/>
    <property type="evidence" value="ECO:0000318"/>
    <property type="project" value="GO_Central"/>
</dbReference>
<dbReference type="GO" id="GO:0070210">
    <property type="term" value="C:Rpd3L-Expanded complex"/>
    <property type="evidence" value="ECO:0000318"/>
    <property type="project" value="GO_Central"/>
</dbReference>
<dbReference type="GO" id="GO:0042393">
    <property type="term" value="F:histone binding"/>
    <property type="evidence" value="ECO:0000318"/>
    <property type="project" value="GO_Central"/>
</dbReference>
<dbReference type="GO" id="GO:0003714">
    <property type="term" value="F:transcription corepressor activity"/>
    <property type="evidence" value="ECO:0000314"/>
    <property type="project" value="SGD"/>
</dbReference>
<dbReference type="GO" id="GO:0006338">
    <property type="term" value="P:chromatin remodeling"/>
    <property type="evidence" value="ECO:0000318"/>
    <property type="project" value="GO_Central"/>
</dbReference>
<dbReference type="GO" id="GO:0051457">
    <property type="term" value="P:maintenance of protein location in nucleus"/>
    <property type="evidence" value="ECO:0000315"/>
    <property type="project" value="SGD"/>
</dbReference>
<dbReference type="GO" id="GO:0051321">
    <property type="term" value="P:meiotic cell cycle"/>
    <property type="evidence" value="ECO:0000316"/>
    <property type="project" value="SGD"/>
</dbReference>
<dbReference type="GO" id="GO:0061186">
    <property type="term" value="P:negative regulation of silent mating-type cassette heterochromatin formation"/>
    <property type="evidence" value="ECO:0000316"/>
    <property type="project" value="SGD"/>
</dbReference>
<dbReference type="GO" id="GO:0000122">
    <property type="term" value="P:negative regulation of transcription by RNA polymerase II"/>
    <property type="evidence" value="ECO:0000316"/>
    <property type="project" value="SGD"/>
</dbReference>
<dbReference type="GO" id="GO:0045944">
    <property type="term" value="P:positive regulation of transcription by RNA polymerase II"/>
    <property type="evidence" value="ECO:0000314"/>
    <property type="project" value="SGD"/>
</dbReference>
<dbReference type="GO" id="GO:0006606">
    <property type="term" value="P:protein import into nucleus"/>
    <property type="evidence" value="ECO:0000315"/>
    <property type="project" value="SGD"/>
</dbReference>
<dbReference type="GO" id="GO:0006355">
    <property type="term" value="P:regulation of DNA-templated transcription"/>
    <property type="evidence" value="ECO:0000318"/>
    <property type="project" value="GO_Central"/>
</dbReference>
<dbReference type="FunFam" id="2.130.10.10:FF:000523">
    <property type="entry name" value="Transcriptional modulator"/>
    <property type="match status" value="1"/>
</dbReference>
<dbReference type="Gene3D" id="2.130.10.10">
    <property type="entry name" value="YVTN repeat-like/Quinoprotein amine dehydrogenase"/>
    <property type="match status" value="1"/>
</dbReference>
<dbReference type="InterPro" id="IPR015943">
    <property type="entry name" value="WD40/YVTN_repeat-like_dom_sf"/>
</dbReference>
<dbReference type="InterPro" id="IPR036322">
    <property type="entry name" value="WD40_repeat_dom_sf"/>
</dbReference>
<dbReference type="InterPro" id="IPR001680">
    <property type="entry name" value="WD40_rpt"/>
</dbReference>
<dbReference type="InterPro" id="IPR050459">
    <property type="entry name" value="WD_repeat_RBAP46/RBAP48/MSI1"/>
</dbReference>
<dbReference type="PANTHER" id="PTHR22850">
    <property type="entry name" value="WD40 REPEAT FAMILY"/>
    <property type="match status" value="1"/>
</dbReference>
<dbReference type="SMART" id="SM00320">
    <property type="entry name" value="WD40"/>
    <property type="match status" value="3"/>
</dbReference>
<dbReference type="SUPFAM" id="SSF50978">
    <property type="entry name" value="WD40 repeat-like"/>
    <property type="match status" value="1"/>
</dbReference>
<dbReference type="PROSITE" id="PS50294">
    <property type="entry name" value="WD_REPEATS_REGION"/>
    <property type="match status" value="1"/>
</dbReference>
<evidence type="ECO:0000256" key="1">
    <source>
        <dbReference type="SAM" id="MobiDB-lite"/>
    </source>
</evidence>
<evidence type="ECO:0000269" key="2">
    <source>
    </source>
</evidence>
<evidence type="ECO:0000269" key="3">
    <source>
    </source>
</evidence>
<evidence type="ECO:0007744" key="4">
    <source>
    </source>
</evidence>
<evidence type="ECO:0007744" key="5">
    <source>
    </source>
</evidence>
<sequence>MPKKVWKSSTPSTYEHISSLRPKFVSRVDNVLHQRKSLTFSNVVVPDKKNNTLTSSVIYSQGSDIYEIDFAVPLQEAASEPVKDYGDAFEGIENTSLSPKFVYQGETVSKMAYLDKTGETTLLSMSKNGSLAWFKEGIKVPIHIVQELMGPATSYASIHSLTRPGDLPEKDFSLAISDFGISNDTETIVKSQSNGDEEDSILKIIDNAGKPGEILRTVHVPGTTVTHTVRFFDNHIFASCSDDNILRFWDTRTSDKPIWVLGEPKNGKLTSFDCSQVSNNLFVTGFSTGIIKLWDARAAEAATTDLTYRQNGEDPIQNEIANFYHAGGDSVVDVQFSATSSSEFFTVGGTGNIYHWNTDYSLSKYNPDDTIAPPQDATEESQTKSLRFLHKGGSRRSPKQIGRRNTAAWHPVIENLVGTVDDDSLVSIYKPYTEESE</sequence>
<feature type="chain" id="PRO_0000051463" description="Transcriptional modulator WTM1">
    <location>
        <begin position="1"/>
        <end position="437"/>
    </location>
</feature>
<feature type="repeat" description="WD 1">
    <location>
        <begin position="103"/>
        <end position="144"/>
    </location>
</feature>
<feature type="repeat" description="WD 2">
    <location>
        <begin position="221"/>
        <end position="259"/>
    </location>
</feature>
<feature type="repeat" description="WD 3">
    <location>
        <begin position="264"/>
        <end position="304"/>
    </location>
</feature>
<feature type="repeat" description="WD 4">
    <location>
        <begin position="326"/>
        <end position="366"/>
    </location>
</feature>
<feature type="region of interest" description="Disordered" evidence="1">
    <location>
        <begin position="368"/>
        <end position="404"/>
    </location>
</feature>
<feature type="compositionally biased region" description="Basic residues" evidence="1">
    <location>
        <begin position="387"/>
        <end position="402"/>
    </location>
</feature>
<feature type="modified residue" description="Phosphothreonine" evidence="4">
    <location>
        <position position="187"/>
    </location>
</feature>
<feature type="modified residue" description="Phosphoserine" evidence="4">
    <location>
        <position position="200"/>
    </location>
</feature>
<feature type="modified residue" description="Phosphothreonine" evidence="4">
    <location>
        <position position="370"/>
    </location>
</feature>
<feature type="modified residue" description="Phosphothreonine" evidence="5">
    <location>
        <position position="406"/>
    </location>
</feature>
<accession>Q12363</accession>
<accession>D6W2T4</accession>
<accession>O00041</accession>
<comment type="function">
    <text evidence="3">Transcriptional modulator with roles in meiotic regulation and silencing. Acts either as an adapter to facilitate nuclear import by KAP122 of the RNR2-RNR4 heterodimer, also called beta-beta' subunit, which corresponds to the small subunit of the ribonucleotide reductase (RNR); or as an anchor to retain RNR2-RNR4 in the nucleus.</text>
</comment>
<comment type="subunit">
    <text evidence="3">Interacts with KAP122.</text>
</comment>
<comment type="interaction">
    <interactant intactId="EBI-20563">
        <id>Q12363</id>
    </interactant>
    <interactant intactId="EBI-13044">
        <id>P32767</id>
        <label>KAP122</label>
    </interactant>
    <organismsDiffer>false</organismsDiffer>
    <experiments>2</experiments>
</comment>
<comment type="interaction">
    <interactant intactId="EBI-20563">
        <id>Q12363</id>
    </interactant>
    <interactant intactId="EBI-15251">
        <id>P49723</id>
        <label>RNR4</label>
    </interactant>
    <organismsDiffer>false</organismsDiffer>
    <experiments>6</experiments>
</comment>
<comment type="interaction">
    <interactant intactId="EBI-20563">
        <id>Q12363</id>
    </interactant>
    <interactant intactId="EBI-20571">
        <id>Q12206</id>
        <label>WTM2</label>
    </interactant>
    <organismsDiffer>false</organismsDiffer>
    <experiments>4</experiments>
</comment>
<comment type="subcellular location">
    <subcellularLocation>
        <location evidence="3">Cytoplasm</location>
    </subcellularLocation>
    <subcellularLocation>
        <location evidence="3">Nucleus</location>
    </subcellularLocation>
    <text>Shuttles between the nucleus and the cytoplasm.</text>
</comment>
<comment type="miscellaneous">
    <text evidence="2">Present with 7750 molecules/cell in log phase SD medium.</text>
</comment>
<keyword id="KW-0963">Cytoplasm</keyword>
<keyword id="KW-0469">Meiosis</keyword>
<keyword id="KW-0539">Nucleus</keyword>
<keyword id="KW-0597">Phosphoprotein</keyword>
<keyword id="KW-1185">Reference proteome</keyword>
<keyword id="KW-0677">Repeat</keyword>
<keyword id="KW-0804">Transcription</keyword>
<keyword id="KW-0805">Transcription regulation</keyword>
<keyword id="KW-0853">WD repeat</keyword>